<feature type="chain" id="PRO_0000154046" description="DNA damage-inducible protein DIN7">
    <location>
        <begin position="1"/>
        <end position="430"/>
    </location>
</feature>
<feature type="region of interest" description="N-domain">
    <location>
        <begin position="1"/>
        <end position="96"/>
    </location>
</feature>
<feature type="region of interest" description="I-domain">
    <location>
        <begin position="114"/>
        <end position="247"/>
    </location>
</feature>
<feature type="binding site" evidence="1">
    <location>
        <position position="30"/>
    </location>
    <ligand>
        <name>Mg(2+)</name>
        <dbReference type="ChEBI" id="CHEBI:18420"/>
        <label>1</label>
    </ligand>
</feature>
<feature type="binding site" evidence="1">
    <location>
        <position position="78"/>
    </location>
    <ligand>
        <name>Mg(2+)</name>
        <dbReference type="ChEBI" id="CHEBI:18420"/>
        <label>1</label>
    </ligand>
</feature>
<feature type="binding site" evidence="1">
    <location>
        <position position="150"/>
    </location>
    <ligand>
        <name>Mg(2+)</name>
        <dbReference type="ChEBI" id="CHEBI:18420"/>
        <label>1</label>
    </ligand>
</feature>
<feature type="binding site" evidence="1">
    <location>
        <position position="152"/>
    </location>
    <ligand>
        <name>Mg(2+)</name>
        <dbReference type="ChEBI" id="CHEBI:18420"/>
        <label>1</label>
    </ligand>
</feature>
<feature type="binding site" evidence="1">
    <location>
        <position position="171"/>
    </location>
    <ligand>
        <name>Mg(2+)</name>
        <dbReference type="ChEBI" id="CHEBI:18420"/>
        <label>2</label>
    </ligand>
</feature>
<feature type="binding site" evidence="1">
    <location>
        <position position="173"/>
    </location>
    <ligand>
        <name>Mg(2+)</name>
        <dbReference type="ChEBI" id="CHEBI:18420"/>
        <label>2</label>
    </ligand>
</feature>
<feature type="binding site" evidence="1">
    <location>
        <position position="227"/>
    </location>
    <ligand>
        <name>Mg(2+)</name>
        <dbReference type="ChEBI" id="CHEBI:18420"/>
        <label>2</label>
    </ligand>
</feature>
<name>DIN7_YEAST</name>
<organism>
    <name type="scientific">Saccharomyces cerevisiae (strain ATCC 204508 / S288c)</name>
    <name type="common">Baker's yeast</name>
    <dbReference type="NCBI Taxonomy" id="559292"/>
    <lineage>
        <taxon>Eukaryota</taxon>
        <taxon>Fungi</taxon>
        <taxon>Dikarya</taxon>
        <taxon>Ascomycota</taxon>
        <taxon>Saccharomycotina</taxon>
        <taxon>Saccharomycetes</taxon>
        <taxon>Saccharomycetales</taxon>
        <taxon>Saccharomycetaceae</taxon>
        <taxon>Saccharomyces</taxon>
    </lineage>
</organism>
<evidence type="ECO:0000250" key="1"/>
<evidence type="ECO:0000305" key="2"/>
<sequence length="430" mass="49034">MGIPGLLPQLKRIQKQVSLKKYMYQTLAIDGYAWLHRASCACAFELVMNKPTNKYLQFFIKRLQLLKRLKIKPYIVFDGDSLFVKNHTETRRRKKRLENEMIAKKLWSAGNRYNAMEYFQKSVDITPEMAKCIIDYCKLHSIPYIVAPFEADPQMVYLEKMGLIQGIISEDSDLLVFGCKTLITKLNDQGKALEISKDDFSALPENFPLGELSEQQFRNLVCLAGCDYTSGIWKVGVVTAMKIVKRYSEMKDILIQIERTEKLCFSKAFKQQVEFANYAFQYQRVFCPLSNQITTLNNIPKAVTNSHAEIIKIMKCIGSVVERGSGVRKDVINTKNIDHKVHEMIAKGELHPVDMASKLINRERKLKARKLFKVGLLGGESNSFNKKVEQPLVDTQDVLSERENSLDNKNASSIYMTSPAAISGTVPSIF</sequence>
<comment type="function">
    <text evidence="1">5'-&gt;3' double-stranded DNA exonuclease.</text>
</comment>
<comment type="cofactor">
    <cofactor evidence="1">
        <name>Mg(2+)</name>
        <dbReference type="ChEBI" id="CHEBI:18420"/>
    </cofactor>
    <text evidence="1">Binds 2 magnesium ions per subunit. They probably participate in the reaction catalyzed by the enzyme. May bind an additional third magnesium ion after substrate binding.</text>
</comment>
<comment type="subcellular location">
    <subcellularLocation>
        <location evidence="2">Nucleus</location>
    </subcellularLocation>
</comment>
<comment type="induction">
    <text>By UV light, methyl methane-sulfonate (MMS) or hydroxyurea (HU), and during meiosis.</text>
</comment>
<comment type="similarity">
    <text evidence="2">Belongs to the XPG/RAD2 endonuclease family.</text>
</comment>
<gene>
    <name type="primary">DIN7</name>
    <name type="synonym">DIN3</name>
    <name type="ordered locus">YDR263C</name>
    <name type="ORF">YD9320B.02C</name>
</gene>
<protein>
    <recommendedName>
        <fullName>DNA damage-inducible protein DIN7</fullName>
        <ecNumber>3.1.-.-</ecNumber>
    </recommendedName>
</protein>
<proteinExistence type="evidence at transcript level"/>
<keyword id="KW-0227">DNA damage</keyword>
<keyword id="KW-0234">DNA repair</keyword>
<keyword id="KW-0255">Endonuclease</keyword>
<keyword id="KW-0378">Hydrolase</keyword>
<keyword id="KW-0460">Magnesium</keyword>
<keyword id="KW-0479">Metal-binding</keyword>
<keyword id="KW-0540">Nuclease</keyword>
<keyword id="KW-0539">Nucleus</keyword>
<keyword id="KW-1185">Reference proteome</keyword>
<dbReference type="EC" id="3.1.-.-"/>
<dbReference type="EMBL" id="X90707">
    <property type="protein sequence ID" value="CAA62233.1"/>
    <property type="molecule type" value="Genomic_DNA"/>
</dbReference>
<dbReference type="EMBL" id="Z70202">
    <property type="protein sequence ID" value="CAA94102.1"/>
    <property type="molecule type" value="Genomic_DNA"/>
</dbReference>
<dbReference type="EMBL" id="Z68290">
    <property type="protein sequence ID" value="CAA92581.1"/>
    <property type="molecule type" value="Genomic_DNA"/>
</dbReference>
<dbReference type="EMBL" id="BK006938">
    <property type="protein sequence ID" value="DAA12107.1"/>
    <property type="molecule type" value="Genomic_DNA"/>
</dbReference>
<dbReference type="PIR" id="S61118">
    <property type="entry name" value="S61118"/>
</dbReference>
<dbReference type="RefSeq" id="NP_010549.3">
    <property type="nucleotide sequence ID" value="NM_001180571.3"/>
</dbReference>
<dbReference type="SMR" id="Q12086"/>
<dbReference type="BioGRID" id="32319">
    <property type="interactions" value="49"/>
</dbReference>
<dbReference type="DIP" id="DIP-5214N"/>
<dbReference type="FunCoup" id="Q12086">
    <property type="interactions" value="235"/>
</dbReference>
<dbReference type="IntAct" id="Q12086">
    <property type="interactions" value="2"/>
</dbReference>
<dbReference type="MINT" id="Q12086"/>
<dbReference type="STRING" id="4932.YDR263C"/>
<dbReference type="PaxDb" id="4932-YDR263C"/>
<dbReference type="PeptideAtlas" id="Q12086"/>
<dbReference type="EnsemblFungi" id="YDR263C_mRNA">
    <property type="protein sequence ID" value="YDR263C"/>
    <property type="gene ID" value="YDR263C"/>
</dbReference>
<dbReference type="GeneID" id="851856"/>
<dbReference type="KEGG" id="sce:YDR263C"/>
<dbReference type="AGR" id="SGD:S000002671"/>
<dbReference type="SGD" id="S000002671">
    <property type="gene designation" value="DIN7"/>
</dbReference>
<dbReference type="VEuPathDB" id="FungiDB:YDR263C"/>
<dbReference type="eggNOG" id="KOG2518">
    <property type="taxonomic scope" value="Eukaryota"/>
</dbReference>
<dbReference type="GeneTree" id="ENSGT00510000047676"/>
<dbReference type="HOGENOM" id="CLU_008978_3_0_1"/>
<dbReference type="InParanoid" id="Q12086"/>
<dbReference type="OMA" id="DVQFRAM"/>
<dbReference type="OrthoDB" id="26491at2759"/>
<dbReference type="BioCyc" id="YEAST:G3O-29833-MONOMER"/>
<dbReference type="BioGRID-ORCS" id="851856">
    <property type="hits" value="0 hits in 10 CRISPR screens"/>
</dbReference>
<dbReference type="PRO" id="PR:Q12086"/>
<dbReference type="Proteomes" id="UP000002311">
    <property type="component" value="Chromosome IV"/>
</dbReference>
<dbReference type="RNAct" id="Q12086">
    <property type="molecule type" value="protein"/>
</dbReference>
<dbReference type="GO" id="GO:0005739">
    <property type="term" value="C:mitochondrion"/>
    <property type="evidence" value="ECO:0000314"/>
    <property type="project" value="SGD"/>
</dbReference>
<dbReference type="GO" id="GO:0005634">
    <property type="term" value="C:nucleus"/>
    <property type="evidence" value="ECO:0007669"/>
    <property type="project" value="UniProtKB-SubCell"/>
</dbReference>
<dbReference type="GO" id="GO:0035312">
    <property type="term" value="F:5'-3' DNA exonuclease activity"/>
    <property type="evidence" value="ECO:0000315"/>
    <property type="project" value="SGD"/>
</dbReference>
<dbReference type="GO" id="GO:0017108">
    <property type="term" value="F:5'-flap endonuclease activity"/>
    <property type="evidence" value="ECO:0000318"/>
    <property type="project" value="GO_Central"/>
</dbReference>
<dbReference type="GO" id="GO:0003677">
    <property type="term" value="F:DNA binding"/>
    <property type="evidence" value="ECO:0007669"/>
    <property type="project" value="InterPro"/>
</dbReference>
<dbReference type="GO" id="GO:0046872">
    <property type="term" value="F:metal ion binding"/>
    <property type="evidence" value="ECO:0007669"/>
    <property type="project" value="UniProtKB-KW"/>
</dbReference>
<dbReference type="GO" id="GO:0000729">
    <property type="term" value="P:DNA double-strand break processing"/>
    <property type="evidence" value="ECO:0000318"/>
    <property type="project" value="GO_Central"/>
</dbReference>
<dbReference type="GO" id="GO:0006281">
    <property type="term" value="P:DNA repair"/>
    <property type="evidence" value="ECO:0000314"/>
    <property type="project" value="SGD"/>
</dbReference>
<dbReference type="CDD" id="cd09857">
    <property type="entry name" value="PIN_EXO1"/>
    <property type="match status" value="1"/>
</dbReference>
<dbReference type="FunFam" id="1.10.150.20:FF:000011">
    <property type="entry name" value="exonuclease 1"/>
    <property type="match status" value="1"/>
</dbReference>
<dbReference type="FunFam" id="3.40.50.1010:FF:000002">
    <property type="entry name" value="Exonuclease 1, putative"/>
    <property type="match status" value="1"/>
</dbReference>
<dbReference type="Gene3D" id="1.10.150.20">
    <property type="entry name" value="5' to 3' exonuclease, C-terminal subdomain"/>
    <property type="match status" value="1"/>
</dbReference>
<dbReference type="Gene3D" id="3.40.50.1010">
    <property type="entry name" value="5'-nuclease"/>
    <property type="match status" value="1"/>
</dbReference>
<dbReference type="InterPro" id="IPR036279">
    <property type="entry name" value="5-3_exonuclease_C_sf"/>
</dbReference>
<dbReference type="InterPro" id="IPR008918">
    <property type="entry name" value="HhH2"/>
</dbReference>
<dbReference type="InterPro" id="IPR029060">
    <property type="entry name" value="PIN-like_dom_sf"/>
</dbReference>
<dbReference type="InterPro" id="IPR044752">
    <property type="entry name" value="PIN-like_EXO1"/>
</dbReference>
<dbReference type="InterPro" id="IPR006086">
    <property type="entry name" value="XPG-I_dom"/>
</dbReference>
<dbReference type="InterPro" id="IPR006084">
    <property type="entry name" value="XPG/Rad2"/>
</dbReference>
<dbReference type="InterPro" id="IPR019974">
    <property type="entry name" value="XPG_CS"/>
</dbReference>
<dbReference type="InterPro" id="IPR006085">
    <property type="entry name" value="XPG_DNA_repair_N"/>
</dbReference>
<dbReference type="PANTHER" id="PTHR11081:SF65">
    <property type="entry name" value="DNA DAMAGE-INDUCIBLE PROTEIN DIN7-RELATED"/>
    <property type="match status" value="1"/>
</dbReference>
<dbReference type="PANTHER" id="PTHR11081">
    <property type="entry name" value="FLAP ENDONUCLEASE FAMILY MEMBER"/>
    <property type="match status" value="1"/>
</dbReference>
<dbReference type="Pfam" id="PF00867">
    <property type="entry name" value="XPG_I"/>
    <property type="match status" value="1"/>
</dbReference>
<dbReference type="Pfam" id="PF00752">
    <property type="entry name" value="XPG_N"/>
    <property type="match status" value="1"/>
</dbReference>
<dbReference type="PRINTS" id="PR00853">
    <property type="entry name" value="XPGRADSUPER"/>
</dbReference>
<dbReference type="SMART" id="SM00279">
    <property type="entry name" value="HhH2"/>
    <property type="match status" value="1"/>
</dbReference>
<dbReference type="SMART" id="SM00484">
    <property type="entry name" value="XPGI"/>
    <property type="match status" value="1"/>
</dbReference>
<dbReference type="SMART" id="SM00485">
    <property type="entry name" value="XPGN"/>
    <property type="match status" value="1"/>
</dbReference>
<dbReference type="SUPFAM" id="SSF47807">
    <property type="entry name" value="5' to 3' exonuclease, C-terminal subdomain"/>
    <property type="match status" value="1"/>
</dbReference>
<dbReference type="SUPFAM" id="SSF88723">
    <property type="entry name" value="PIN domain-like"/>
    <property type="match status" value="1"/>
</dbReference>
<dbReference type="PROSITE" id="PS00841">
    <property type="entry name" value="XPG_1"/>
    <property type="match status" value="1"/>
</dbReference>
<dbReference type="PROSITE" id="PS00842">
    <property type="entry name" value="XPG_2"/>
    <property type="match status" value="1"/>
</dbReference>
<accession>Q12086</accession>
<accession>D6VSP7</accession>
<reference key="1">
    <citation type="journal article" date="1997" name="Mol. Gen. Genet.">
        <title>Characterization of a novel DNA damage-inducible gene of Saccharomyces cerevisiae, DIN7, which is a structural homolog of the RAD2 and RAD27 DNA repair genes.</title>
        <authorList>
            <person name="Mieczkowski P.A."/>
            <person name="Fikus M."/>
            <person name="Ciesla Z."/>
        </authorList>
    </citation>
    <scope>NUCLEOTIDE SEQUENCE [GENOMIC DNA]</scope>
    <source>
        <strain>OL1</strain>
    </source>
</reference>
<reference key="2">
    <citation type="journal article" date="1997" name="Nature">
        <title>The nucleotide sequence of Saccharomyces cerevisiae chromosome IV.</title>
        <authorList>
            <person name="Jacq C."/>
            <person name="Alt-Moerbe J."/>
            <person name="Andre B."/>
            <person name="Arnold W."/>
            <person name="Bahr A."/>
            <person name="Ballesta J.P.G."/>
            <person name="Bargues M."/>
            <person name="Baron L."/>
            <person name="Becker A."/>
            <person name="Biteau N."/>
            <person name="Bloecker H."/>
            <person name="Blugeon C."/>
            <person name="Boskovic J."/>
            <person name="Brandt P."/>
            <person name="Brueckner M."/>
            <person name="Buitrago M.J."/>
            <person name="Coster F."/>
            <person name="Delaveau T."/>
            <person name="del Rey F."/>
            <person name="Dujon B."/>
            <person name="Eide L.G."/>
            <person name="Garcia-Cantalejo J.M."/>
            <person name="Goffeau A."/>
            <person name="Gomez-Peris A."/>
            <person name="Granotier C."/>
            <person name="Hanemann V."/>
            <person name="Hankeln T."/>
            <person name="Hoheisel J.D."/>
            <person name="Jaeger W."/>
            <person name="Jimenez A."/>
            <person name="Jonniaux J.-L."/>
            <person name="Kraemer C."/>
            <person name="Kuester H."/>
            <person name="Laamanen P."/>
            <person name="Legros Y."/>
            <person name="Louis E.J."/>
            <person name="Moeller-Rieker S."/>
            <person name="Monnet A."/>
            <person name="Moro M."/>
            <person name="Mueller-Auer S."/>
            <person name="Nussbaumer B."/>
            <person name="Paricio N."/>
            <person name="Paulin L."/>
            <person name="Perea J."/>
            <person name="Perez-Alonso M."/>
            <person name="Perez-Ortin J.E."/>
            <person name="Pohl T.M."/>
            <person name="Prydz H."/>
            <person name="Purnelle B."/>
            <person name="Rasmussen S.W."/>
            <person name="Remacha M.A."/>
            <person name="Revuelta J.L."/>
            <person name="Rieger M."/>
            <person name="Salom D."/>
            <person name="Saluz H.P."/>
            <person name="Saiz J.E."/>
            <person name="Saren A.-M."/>
            <person name="Schaefer M."/>
            <person name="Scharfe M."/>
            <person name="Schmidt E.R."/>
            <person name="Schneider C."/>
            <person name="Scholler P."/>
            <person name="Schwarz S."/>
            <person name="Soler-Mira A."/>
            <person name="Urrestarazu L.A."/>
            <person name="Verhasselt P."/>
            <person name="Vissers S."/>
            <person name="Voet M."/>
            <person name="Volckaert G."/>
            <person name="Wagner G."/>
            <person name="Wambutt R."/>
            <person name="Wedler E."/>
            <person name="Wedler H."/>
            <person name="Woelfl S."/>
            <person name="Harris D.E."/>
            <person name="Bowman S."/>
            <person name="Brown D."/>
            <person name="Churcher C.M."/>
            <person name="Connor R."/>
            <person name="Dedman K."/>
            <person name="Gentles S."/>
            <person name="Hamlin N."/>
            <person name="Hunt S."/>
            <person name="Jones L."/>
            <person name="McDonald S."/>
            <person name="Murphy L.D."/>
            <person name="Niblett D."/>
            <person name="Odell C."/>
            <person name="Oliver K."/>
            <person name="Rajandream M.A."/>
            <person name="Richards C."/>
            <person name="Shore L."/>
            <person name="Walsh S.V."/>
            <person name="Barrell B.G."/>
            <person name="Dietrich F.S."/>
            <person name="Mulligan J.T."/>
            <person name="Allen E."/>
            <person name="Araujo R."/>
            <person name="Aviles E."/>
            <person name="Berno A."/>
            <person name="Carpenter J."/>
            <person name="Chen E."/>
            <person name="Cherry J.M."/>
            <person name="Chung E."/>
            <person name="Duncan M."/>
            <person name="Hunicke-Smith S."/>
            <person name="Hyman R.W."/>
            <person name="Komp C."/>
            <person name="Lashkari D."/>
            <person name="Lew H."/>
            <person name="Lin D."/>
            <person name="Mosedale D."/>
            <person name="Nakahara K."/>
            <person name="Namath A."/>
            <person name="Oefner P."/>
            <person name="Oh C."/>
            <person name="Petel F.X."/>
            <person name="Roberts D."/>
            <person name="Schramm S."/>
            <person name="Schroeder M."/>
            <person name="Shogren T."/>
            <person name="Shroff N."/>
            <person name="Winant A."/>
            <person name="Yelton M.A."/>
            <person name="Botstein D."/>
            <person name="Davis R.W."/>
            <person name="Johnston M."/>
            <person name="Andrews S."/>
            <person name="Brinkman R."/>
            <person name="Cooper J."/>
            <person name="Ding H."/>
            <person name="Du Z."/>
            <person name="Favello A."/>
            <person name="Fulton L."/>
            <person name="Gattung S."/>
            <person name="Greco T."/>
            <person name="Hallsworth K."/>
            <person name="Hawkins J."/>
            <person name="Hillier L.W."/>
            <person name="Jier M."/>
            <person name="Johnson D."/>
            <person name="Johnston L."/>
            <person name="Kirsten J."/>
            <person name="Kucaba T."/>
            <person name="Langston Y."/>
            <person name="Latreille P."/>
            <person name="Le T."/>
            <person name="Mardis E."/>
            <person name="Menezes S."/>
            <person name="Miller N."/>
            <person name="Nhan M."/>
            <person name="Pauley A."/>
            <person name="Peluso D."/>
            <person name="Rifkin L."/>
            <person name="Riles L."/>
            <person name="Taich A."/>
            <person name="Trevaskis E."/>
            <person name="Vignati D."/>
            <person name="Wilcox L."/>
            <person name="Wohldman P."/>
            <person name="Vaudin M."/>
            <person name="Wilson R."/>
            <person name="Waterston R."/>
            <person name="Albermann K."/>
            <person name="Hani J."/>
            <person name="Heumann K."/>
            <person name="Kleine K."/>
            <person name="Mewes H.-W."/>
            <person name="Zollner A."/>
            <person name="Zaccaria P."/>
        </authorList>
    </citation>
    <scope>NUCLEOTIDE SEQUENCE [LARGE SCALE GENOMIC DNA]</scope>
    <source>
        <strain>ATCC 204508 / S288c</strain>
    </source>
</reference>
<reference key="3">
    <citation type="journal article" date="2014" name="G3 (Bethesda)">
        <title>The reference genome sequence of Saccharomyces cerevisiae: Then and now.</title>
        <authorList>
            <person name="Engel S.R."/>
            <person name="Dietrich F.S."/>
            <person name="Fisk D.G."/>
            <person name="Binkley G."/>
            <person name="Balakrishnan R."/>
            <person name="Costanzo M.C."/>
            <person name="Dwight S.S."/>
            <person name="Hitz B.C."/>
            <person name="Karra K."/>
            <person name="Nash R.S."/>
            <person name="Weng S."/>
            <person name="Wong E.D."/>
            <person name="Lloyd P."/>
            <person name="Skrzypek M.S."/>
            <person name="Miyasato S.R."/>
            <person name="Simison M."/>
            <person name="Cherry J.M."/>
        </authorList>
    </citation>
    <scope>GENOME REANNOTATION</scope>
    <source>
        <strain>ATCC 204508 / S288c</strain>
    </source>
</reference>